<organism>
    <name type="scientific">Burkholderia cenocepacia (strain HI2424)</name>
    <dbReference type="NCBI Taxonomy" id="331272"/>
    <lineage>
        <taxon>Bacteria</taxon>
        <taxon>Pseudomonadati</taxon>
        <taxon>Pseudomonadota</taxon>
        <taxon>Betaproteobacteria</taxon>
        <taxon>Burkholderiales</taxon>
        <taxon>Burkholderiaceae</taxon>
        <taxon>Burkholderia</taxon>
        <taxon>Burkholderia cepacia complex</taxon>
    </lineage>
</organism>
<dbReference type="EMBL" id="CP000459">
    <property type="protein sequence ID" value="ABK12343.1"/>
    <property type="status" value="ALT_INIT"/>
    <property type="molecule type" value="Genomic_DNA"/>
</dbReference>
<dbReference type="RefSeq" id="WP_041489653.1">
    <property type="nucleotide sequence ID" value="NC_008543.1"/>
</dbReference>
<dbReference type="SMR" id="A0B3W7"/>
<dbReference type="KEGG" id="bch:Bcen2424_5610"/>
<dbReference type="HOGENOM" id="CLU_057831_0_0_4"/>
<dbReference type="Gene3D" id="1.10.10.10">
    <property type="entry name" value="Winged helix-like DNA-binding domain superfamily/Winged helix DNA-binding domain"/>
    <property type="match status" value="2"/>
</dbReference>
<dbReference type="HAMAP" id="MF_01584">
    <property type="entry name" value="UPF0502"/>
    <property type="match status" value="1"/>
</dbReference>
<dbReference type="InterPro" id="IPR007432">
    <property type="entry name" value="DUF480"/>
</dbReference>
<dbReference type="InterPro" id="IPR036388">
    <property type="entry name" value="WH-like_DNA-bd_sf"/>
</dbReference>
<dbReference type="InterPro" id="IPR036390">
    <property type="entry name" value="WH_DNA-bd_sf"/>
</dbReference>
<dbReference type="PANTHER" id="PTHR38768">
    <property type="entry name" value="UPF0502 PROTEIN YCEH"/>
    <property type="match status" value="1"/>
</dbReference>
<dbReference type="PANTHER" id="PTHR38768:SF1">
    <property type="entry name" value="UPF0502 PROTEIN YCEH"/>
    <property type="match status" value="1"/>
</dbReference>
<dbReference type="Pfam" id="PF04337">
    <property type="entry name" value="DUF480"/>
    <property type="match status" value="1"/>
</dbReference>
<dbReference type="SUPFAM" id="SSF46785">
    <property type="entry name" value="Winged helix' DNA-binding domain"/>
    <property type="match status" value="2"/>
</dbReference>
<feature type="chain" id="PRO_0000309373" description="UPF0502 protein Bcen2424_5610">
    <location>
        <begin position="1"/>
        <end position="236"/>
    </location>
</feature>
<reference key="1">
    <citation type="submission" date="2006-08" db="EMBL/GenBank/DDBJ databases">
        <title>Complete sequence of chromosome 2 of Burkholderia cenocepacia HI2424.</title>
        <authorList>
            <person name="Copeland A."/>
            <person name="Lucas S."/>
            <person name="Lapidus A."/>
            <person name="Barry K."/>
            <person name="Detter J.C."/>
            <person name="Glavina del Rio T."/>
            <person name="Hammon N."/>
            <person name="Israni S."/>
            <person name="Pitluck S."/>
            <person name="Chain P."/>
            <person name="Malfatti S."/>
            <person name="Shin M."/>
            <person name="Vergez L."/>
            <person name="Schmutz J."/>
            <person name="Larimer F."/>
            <person name="Land M."/>
            <person name="Hauser L."/>
            <person name="Kyrpides N."/>
            <person name="Kim E."/>
            <person name="LiPuma J.J."/>
            <person name="Gonzalez C.F."/>
            <person name="Konstantinidis K."/>
            <person name="Tiedje J.M."/>
            <person name="Richardson P."/>
        </authorList>
    </citation>
    <scope>NUCLEOTIDE SEQUENCE [LARGE SCALE GENOMIC DNA]</scope>
    <source>
        <strain>HI2424</strain>
    </source>
</reference>
<gene>
    <name type="ordered locus">Bcen2424_5610</name>
</gene>
<comment type="similarity">
    <text evidence="1">Belongs to the UPF0502 family.</text>
</comment>
<comment type="sequence caution" evidence="2">
    <conflict type="erroneous initiation">
        <sequence resource="EMBL-CDS" id="ABK12343"/>
    </conflict>
</comment>
<protein>
    <recommendedName>
        <fullName evidence="1">UPF0502 protein Bcen2424_5610</fullName>
    </recommendedName>
</protein>
<sequence>MNTTPDTPTPRALRELTPLEARILGVLVEKQHTVPDTYPLSLNALTAGCNQKTARAPVMNVSEDEVTTALDELKRLSLVMEGSSSRVPRFEHNMNRVLGIPSQAIALLTILLLRGPQTAAELRLNSARLHGFADISSVEAFLDELAARAQPLVVRLPRAPGARENRWMHLMCGDVNMADFASADAGGGADSVPPSEFEALKAEQKRLADEVARLNALVQRMASELGIDVDAPGDAS</sequence>
<proteinExistence type="inferred from homology"/>
<accession>A0B3W7</accession>
<name>Y5610_BURCH</name>
<evidence type="ECO:0000255" key="1">
    <source>
        <dbReference type="HAMAP-Rule" id="MF_01584"/>
    </source>
</evidence>
<evidence type="ECO:0000305" key="2"/>